<reference key="1">
    <citation type="journal article" date="2005" name="Physiol. Genomics">
        <title>Cross-species analysis of the mammalian beta-defensin gene family: presence of syntenic gene clusters and preferential expression in the male reproductive tract.</title>
        <authorList>
            <person name="Patil A.A."/>
            <person name="Cai Y."/>
            <person name="Sang Y."/>
            <person name="Blecha F."/>
            <person name="Zhang G."/>
        </authorList>
    </citation>
    <scope>NUCLEOTIDE SEQUENCE [MRNA] (ISOFORMS 1 AND 2)</scope>
</reference>
<reference key="2">
    <citation type="submission" date="2006-11" db="EMBL/GenBank/DDBJ databases">
        <title>Evolution and sequence variation of human beta-defensin genes.</title>
        <authorList>
            <person name="Hollox E.J."/>
            <person name="Armour J.A.L."/>
        </authorList>
    </citation>
    <scope>NUCLEOTIDE SEQUENCE [GENOMIC DNA] (ISOFORMS 1 AND 2)</scope>
</reference>
<organism>
    <name type="scientific">Pan troglodytes</name>
    <name type="common">Chimpanzee</name>
    <dbReference type="NCBI Taxonomy" id="9598"/>
    <lineage>
        <taxon>Eukaryota</taxon>
        <taxon>Metazoa</taxon>
        <taxon>Chordata</taxon>
        <taxon>Craniata</taxon>
        <taxon>Vertebrata</taxon>
        <taxon>Euteleostomi</taxon>
        <taxon>Mammalia</taxon>
        <taxon>Eutheria</taxon>
        <taxon>Euarchontoglires</taxon>
        <taxon>Primates</taxon>
        <taxon>Haplorrhini</taxon>
        <taxon>Catarrhini</taxon>
        <taxon>Hominidae</taxon>
        <taxon>Pan</taxon>
    </lineage>
</organism>
<evidence type="ECO:0000250" key="1"/>
<evidence type="ECO:0000255" key="2"/>
<evidence type="ECO:0000303" key="3">
    <source>
    </source>
</evidence>
<evidence type="ECO:0000305" key="4"/>
<gene>
    <name type="primary">DEFB119</name>
    <name type="synonym">DEFB120</name>
</gene>
<keyword id="KW-0025">Alternative splicing</keyword>
<keyword id="KW-0044">Antibiotic</keyword>
<keyword id="KW-0929">Antimicrobial</keyword>
<keyword id="KW-0211">Defensin</keyword>
<keyword id="KW-1015">Disulfide bond</keyword>
<keyword id="KW-1185">Reference proteome</keyword>
<keyword id="KW-0964">Secreted</keyword>
<keyword id="KW-0732">Signal</keyword>
<comment type="function">
    <text evidence="4">Has antibacterial activity.</text>
</comment>
<comment type="subcellular location">
    <subcellularLocation>
        <location evidence="4">Secreted</location>
    </subcellularLocation>
</comment>
<comment type="alternative products">
    <event type="alternative splicing"/>
    <isoform>
        <id>Q30KK8-1</id>
        <name>1</name>
        <sequence type="displayed"/>
    </isoform>
    <isoform>
        <id>Q30KK8-2</id>
        <name>2</name>
        <sequence type="described" ref="VSP_029875"/>
    </isoform>
</comment>
<comment type="similarity">
    <text evidence="4">Belongs to the beta-defensin family.</text>
</comment>
<sequence length="84" mass="9935">MKLLYLFLAILLAIEEPVISGKRHILRRMGNSGICRASCKKNEQPYLYCRNYQSCCLQSYMRISISGKEENTDWSYEKQWPRLP</sequence>
<feature type="signal peptide" evidence="2">
    <location>
        <begin position="1"/>
        <end position="21"/>
    </location>
</feature>
<feature type="peptide" id="PRO_0000045348" description="Beta-defensin 119">
    <location>
        <begin position="22"/>
        <end position="84"/>
    </location>
</feature>
<feature type="disulfide bond" evidence="1">
    <location>
        <begin position="35"/>
        <end position="49"/>
    </location>
</feature>
<feature type="disulfide bond" evidence="1">
    <location>
        <begin position="39"/>
        <end position="56"/>
    </location>
</feature>
<feature type="splice variant" id="VSP_029875" description="In isoform 2." evidence="3">
    <original>GKRHILRRMGNSGICRASCKKNEQPYLYCRNYQSCCLQSYMRISISGKEENTDWSYEKQWPRLP</original>
    <variation>VECWMDGHCRLLCKDGEDSIIRCRNRKRCCVPSRYLTIQPVTIHGILGWTTPQMSTTAPKTKTNITNR</variation>
    <location>
        <begin position="21"/>
        <end position="84"/>
    </location>
</feature>
<accession>Q30KK8</accession>
<accession>A4H224</accession>
<accession>A4H229</accession>
<accession>Q30KK7</accession>
<dbReference type="EMBL" id="DQ012071">
    <property type="protein sequence ID" value="AAY59802.1"/>
    <property type="molecule type" value="mRNA"/>
</dbReference>
<dbReference type="EMBL" id="DQ012072">
    <property type="protein sequence ID" value="AAY59803.1"/>
    <property type="molecule type" value="mRNA"/>
</dbReference>
<dbReference type="EMBL" id="AM410129">
    <property type="protein sequence ID" value="CAL68944.1"/>
    <property type="molecule type" value="Genomic_DNA"/>
</dbReference>
<dbReference type="EMBL" id="AM410134">
    <property type="protein sequence ID" value="CAL68949.1"/>
    <property type="molecule type" value="Genomic_DNA"/>
</dbReference>
<dbReference type="RefSeq" id="NP_001095143.1">
    <molecule id="Q30KK8-1"/>
    <property type="nucleotide sequence ID" value="NM_001101673.1"/>
</dbReference>
<dbReference type="RefSeq" id="XP_009435280.1">
    <molecule id="Q30KK8-2"/>
    <property type="nucleotide sequence ID" value="XM_009437005.2"/>
</dbReference>
<dbReference type="PaxDb" id="9598-ENSPTRP00000022889"/>
<dbReference type="Ensembl" id="ENSPTRT00000024799.2">
    <molecule id="Q30KK8-1"/>
    <property type="protein sequence ID" value="ENSPTRP00000022889.1"/>
    <property type="gene ID" value="ENSPTRG00000013351.7"/>
</dbReference>
<dbReference type="Ensembl" id="ENSPTRT00000086147.1">
    <molecule id="Q30KK8-2"/>
    <property type="protein sequence ID" value="ENSPTRP00000071557.1"/>
    <property type="gene ID" value="ENSPTRG00000013351.7"/>
</dbReference>
<dbReference type="GeneID" id="746052"/>
<dbReference type="KEGG" id="ptr:746052"/>
<dbReference type="CTD" id="245932"/>
<dbReference type="eggNOG" id="ENOG502TDXM">
    <property type="taxonomic scope" value="Eukaryota"/>
</dbReference>
<dbReference type="GeneTree" id="ENSGT00390000000279"/>
<dbReference type="HOGENOM" id="CLU_193927_0_0_1"/>
<dbReference type="InParanoid" id="Q30KK8"/>
<dbReference type="OMA" id="QENRWPK"/>
<dbReference type="OrthoDB" id="9257at9604"/>
<dbReference type="Proteomes" id="UP000002277">
    <property type="component" value="Chromosome 20"/>
</dbReference>
<dbReference type="Bgee" id="ENSPTRG00000013351">
    <property type="expression patterns" value="Expressed in testis and 1 other cell type or tissue"/>
</dbReference>
<dbReference type="GO" id="GO:0005576">
    <property type="term" value="C:extracellular region"/>
    <property type="evidence" value="ECO:0007669"/>
    <property type="project" value="UniProtKB-SubCell"/>
</dbReference>
<dbReference type="GO" id="GO:0050829">
    <property type="term" value="P:defense response to Gram-negative bacterium"/>
    <property type="evidence" value="ECO:0007669"/>
    <property type="project" value="InterPro"/>
</dbReference>
<dbReference type="GO" id="GO:0050830">
    <property type="term" value="P:defense response to Gram-positive bacterium"/>
    <property type="evidence" value="ECO:0007669"/>
    <property type="project" value="InterPro"/>
</dbReference>
<dbReference type="InterPro" id="IPR028060">
    <property type="entry name" value="Defensin_big_dom"/>
</dbReference>
<dbReference type="PANTHER" id="PTHR47902">
    <property type="entry name" value="BETA-DEFENSIN 119"/>
    <property type="match status" value="1"/>
</dbReference>
<dbReference type="PANTHER" id="PTHR47902:SF1">
    <property type="entry name" value="BETA-DEFENSIN 119"/>
    <property type="match status" value="1"/>
</dbReference>
<dbReference type="Pfam" id="PF14862">
    <property type="entry name" value="Defensin_big"/>
    <property type="match status" value="1"/>
</dbReference>
<proteinExistence type="inferred from homology"/>
<name>DB119_PANTR</name>
<protein>
    <recommendedName>
        <fullName>Beta-defensin 119</fullName>
    </recommendedName>
    <alternativeName>
        <fullName>Beta-defensin 120</fullName>
    </alternativeName>
    <alternativeName>
        <fullName>Defensin, beta 119</fullName>
    </alternativeName>
    <alternativeName>
        <fullName>Defensin, beta 120</fullName>
    </alternativeName>
</protein>